<feature type="chain" id="PRO_0000188969" description="Transcription termination factor Rho">
    <location>
        <begin position="1"/>
        <end position="610"/>
    </location>
</feature>
<feature type="domain" description="Rho RNA-BD" evidence="2">
    <location>
        <begin position="231"/>
        <end position="309"/>
    </location>
</feature>
<feature type="region of interest" description="Disordered" evidence="3">
    <location>
        <begin position="117"/>
        <end position="227"/>
    </location>
</feature>
<feature type="compositionally biased region" description="Basic and acidic residues" evidence="3">
    <location>
        <begin position="118"/>
        <end position="131"/>
    </location>
</feature>
<feature type="compositionally biased region" description="Polar residues" evidence="3">
    <location>
        <begin position="178"/>
        <end position="187"/>
    </location>
</feature>
<feature type="compositionally biased region" description="Basic and acidic residues" evidence="3">
    <location>
        <begin position="189"/>
        <end position="198"/>
    </location>
</feature>
<feature type="compositionally biased region" description="Basic residues" evidence="3">
    <location>
        <begin position="199"/>
        <end position="214"/>
    </location>
</feature>
<feature type="compositionally biased region" description="Basic and acidic residues" evidence="3">
    <location>
        <begin position="215"/>
        <end position="227"/>
    </location>
</feature>
<feature type="binding site" evidence="1">
    <location>
        <begin position="352"/>
        <end position="357"/>
    </location>
    <ligand>
        <name>ATP</name>
        <dbReference type="ChEBI" id="CHEBI:30616"/>
    </ligand>
</feature>
<feature type="binding site" evidence="1">
    <location>
        <begin position="364"/>
        <end position="369"/>
    </location>
    <ligand>
        <name>ATP</name>
        <dbReference type="ChEBI" id="CHEBI:30616"/>
    </ligand>
</feature>
<feature type="binding site" evidence="1">
    <location>
        <position position="395"/>
    </location>
    <ligand>
        <name>ATP</name>
        <dbReference type="ChEBI" id="CHEBI:30616"/>
    </ligand>
</feature>
<dbReference type="EC" id="3.6.4.-" evidence="1"/>
<dbReference type="EMBL" id="U15186">
    <property type="protein sequence ID" value="AAA63093.1"/>
    <property type="molecule type" value="Genomic_DNA"/>
</dbReference>
<dbReference type="EMBL" id="AL583920">
    <property type="protein sequence ID" value="CAC31513.1"/>
    <property type="molecule type" value="Genomic_DNA"/>
</dbReference>
<dbReference type="PIR" id="T09988">
    <property type="entry name" value="T09988"/>
</dbReference>
<dbReference type="RefSeq" id="NP_301826.1">
    <property type="nucleotide sequence ID" value="NC_002677.1"/>
</dbReference>
<dbReference type="RefSeq" id="WP_010908150.1">
    <property type="nucleotide sequence ID" value="NC_002677.1"/>
</dbReference>
<dbReference type="SMR" id="P45835"/>
<dbReference type="STRING" id="272631.gene:17574959"/>
<dbReference type="KEGG" id="mle:ML1132"/>
<dbReference type="PATRIC" id="fig|272631.5.peg.2054"/>
<dbReference type="Leproma" id="ML1132"/>
<dbReference type="eggNOG" id="COG1158">
    <property type="taxonomic scope" value="Bacteria"/>
</dbReference>
<dbReference type="HOGENOM" id="CLU_016377_3_2_11"/>
<dbReference type="OrthoDB" id="9805197at2"/>
<dbReference type="Proteomes" id="UP000000806">
    <property type="component" value="Chromosome"/>
</dbReference>
<dbReference type="GO" id="GO:0005524">
    <property type="term" value="F:ATP binding"/>
    <property type="evidence" value="ECO:0007669"/>
    <property type="project" value="UniProtKB-UniRule"/>
</dbReference>
<dbReference type="GO" id="GO:0016887">
    <property type="term" value="F:ATP hydrolysis activity"/>
    <property type="evidence" value="ECO:0007669"/>
    <property type="project" value="InterPro"/>
</dbReference>
<dbReference type="GO" id="GO:0008186">
    <property type="term" value="F:ATP-dependent activity, acting on RNA"/>
    <property type="evidence" value="ECO:0007669"/>
    <property type="project" value="InterPro"/>
</dbReference>
<dbReference type="GO" id="GO:0004386">
    <property type="term" value="F:helicase activity"/>
    <property type="evidence" value="ECO:0007669"/>
    <property type="project" value="UniProtKB-UniRule"/>
</dbReference>
<dbReference type="GO" id="GO:0003723">
    <property type="term" value="F:RNA binding"/>
    <property type="evidence" value="ECO:0007669"/>
    <property type="project" value="UniProtKB-UniRule"/>
</dbReference>
<dbReference type="GO" id="GO:0006353">
    <property type="term" value="P:DNA-templated transcription termination"/>
    <property type="evidence" value="ECO:0007669"/>
    <property type="project" value="UniProtKB-UniRule"/>
</dbReference>
<dbReference type="CDD" id="cd01128">
    <property type="entry name" value="rho_factor_C"/>
    <property type="match status" value="1"/>
</dbReference>
<dbReference type="FunFam" id="3.40.50.300:FF:000072">
    <property type="entry name" value="Transcription termination factor Rho"/>
    <property type="match status" value="1"/>
</dbReference>
<dbReference type="Gene3D" id="1.10.720.10">
    <property type="match status" value="1"/>
</dbReference>
<dbReference type="Gene3D" id="2.40.50.140">
    <property type="entry name" value="Nucleic acid-binding proteins"/>
    <property type="match status" value="1"/>
</dbReference>
<dbReference type="Gene3D" id="3.40.50.300">
    <property type="entry name" value="P-loop containing nucleotide triphosphate hydrolases"/>
    <property type="match status" value="1"/>
</dbReference>
<dbReference type="HAMAP" id="MF_01884">
    <property type="entry name" value="Rho"/>
    <property type="match status" value="1"/>
</dbReference>
<dbReference type="InterPro" id="IPR003593">
    <property type="entry name" value="AAA+_ATPase"/>
</dbReference>
<dbReference type="InterPro" id="IPR000194">
    <property type="entry name" value="ATPase_F1/V1/A1_a/bsu_nucl-bd"/>
</dbReference>
<dbReference type="InterPro" id="IPR011129">
    <property type="entry name" value="CSD"/>
</dbReference>
<dbReference type="InterPro" id="IPR012340">
    <property type="entry name" value="NA-bd_OB-fold"/>
</dbReference>
<dbReference type="InterPro" id="IPR027417">
    <property type="entry name" value="P-loop_NTPase"/>
</dbReference>
<dbReference type="InterPro" id="IPR011112">
    <property type="entry name" value="Rho-like_N"/>
</dbReference>
<dbReference type="InterPro" id="IPR041703">
    <property type="entry name" value="Rho_factor_ATP-bd"/>
</dbReference>
<dbReference type="InterPro" id="IPR036269">
    <property type="entry name" value="Rho_N_sf"/>
</dbReference>
<dbReference type="InterPro" id="IPR011113">
    <property type="entry name" value="Rho_RNA-bd"/>
</dbReference>
<dbReference type="InterPro" id="IPR004665">
    <property type="entry name" value="Term_rho"/>
</dbReference>
<dbReference type="NCBIfam" id="NF006886">
    <property type="entry name" value="PRK09376.1"/>
    <property type="match status" value="1"/>
</dbReference>
<dbReference type="NCBIfam" id="TIGR00767">
    <property type="entry name" value="rho"/>
    <property type="match status" value="1"/>
</dbReference>
<dbReference type="PANTHER" id="PTHR46425">
    <property type="entry name" value="TRANSCRIPTION TERMINATION FACTOR RHO"/>
    <property type="match status" value="1"/>
</dbReference>
<dbReference type="PANTHER" id="PTHR46425:SF1">
    <property type="entry name" value="TRANSCRIPTION TERMINATION FACTOR RHO"/>
    <property type="match status" value="1"/>
</dbReference>
<dbReference type="Pfam" id="PF00006">
    <property type="entry name" value="ATP-synt_ab"/>
    <property type="match status" value="1"/>
</dbReference>
<dbReference type="Pfam" id="PF07498">
    <property type="entry name" value="Rho_N"/>
    <property type="match status" value="1"/>
</dbReference>
<dbReference type="Pfam" id="PF07497">
    <property type="entry name" value="Rho_RNA_bind"/>
    <property type="match status" value="1"/>
</dbReference>
<dbReference type="SMART" id="SM00382">
    <property type="entry name" value="AAA"/>
    <property type="match status" value="1"/>
</dbReference>
<dbReference type="SMART" id="SM00357">
    <property type="entry name" value="CSP"/>
    <property type="match status" value="1"/>
</dbReference>
<dbReference type="SMART" id="SM00959">
    <property type="entry name" value="Rho_N"/>
    <property type="match status" value="1"/>
</dbReference>
<dbReference type="SUPFAM" id="SSF50249">
    <property type="entry name" value="Nucleic acid-binding proteins"/>
    <property type="match status" value="1"/>
</dbReference>
<dbReference type="SUPFAM" id="SSF52540">
    <property type="entry name" value="P-loop containing nucleoside triphosphate hydrolases"/>
    <property type="match status" value="1"/>
</dbReference>
<dbReference type="SUPFAM" id="SSF68912">
    <property type="entry name" value="Rho N-terminal domain-like"/>
    <property type="match status" value="1"/>
</dbReference>
<dbReference type="PROSITE" id="PS51856">
    <property type="entry name" value="RHO_RNA_BD"/>
    <property type="match status" value="1"/>
</dbReference>
<sequence>MTETDLITVGENTDDTELTNAVTTDTPDVKATAATVSLGSLSTMVLPELRALANQAGVKGTSGMRKSELIAAIEECRGQANGTSVNDGPSRDHGGSATAISTEALAAQEEQNYAIVEVSRRERRGASREADVTAGTSTAEATESDCQGTADDDTRTLQGGQSDTKTEERGPDVGNDQGVEQQSSSLQPRGDDDGEGRQGRRGRRFRDRDRRRRGERSGDGAEAELRQDDVVQPVAGILDVLDNYAFVRTSGYLAGPHDVYVSMSMVRKNGLRRGDAVTGAVRVPREGEQGHQRQKFNPLVRLDSINGGSVEDAKKRPEFGKLTPLYPNQRLRLETTPDRLTTRVIDLIMPIGKGQRALIVSPPKAGKTTILQDIANAITRNNLECHLMVVLVDERPEEVTDMQRSVKGEVIASTFDRPPSDHTSVAELAIERAKRLVEQGKDVVVLLDSITRLGRAYNNASPASGRILSGGVDSTALYPPKRFLGAARNIEEGGSLTIIATAMVETGSTGDMVIFEEFKGTGNAELKLDRKIAERRVFPAVDVNPSGTRKDELLLSPDEFGIVHKLRRVLSGLDSHQAIDLLMSQLRKTKTNYEFLVQVSKTTPGSMDDD</sequence>
<comment type="function">
    <text evidence="1">Facilitates transcription termination by a mechanism that involves Rho binding to the nascent RNA, activation of Rho's RNA-dependent ATPase activity, and release of the mRNA from the DNA template.</text>
</comment>
<comment type="subunit">
    <text evidence="1">Homohexamer. The homohexamer assembles into an open ring structure.</text>
</comment>
<comment type="similarity">
    <text evidence="1">Belongs to the Rho family.</text>
</comment>
<evidence type="ECO:0000255" key="1">
    <source>
        <dbReference type="HAMAP-Rule" id="MF_01884"/>
    </source>
</evidence>
<evidence type="ECO:0000255" key="2">
    <source>
        <dbReference type="PROSITE-ProRule" id="PRU01203"/>
    </source>
</evidence>
<evidence type="ECO:0000256" key="3">
    <source>
        <dbReference type="SAM" id="MobiDB-lite"/>
    </source>
</evidence>
<protein>
    <recommendedName>
        <fullName evidence="1">Transcription termination factor Rho</fullName>
        <ecNumber evidence="1">3.6.4.-</ecNumber>
    </recommendedName>
    <alternativeName>
        <fullName evidence="1">ATP-dependent helicase Rho</fullName>
    </alternativeName>
</protein>
<organism>
    <name type="scientific">Mycobacterium leprae (strain TN)</name>
    <dbReference type="NCBI Taxonomy" id="272631"/>
    <lineage>
        <taxon>Bacteria</taxon>
        <taxon>Bacillati</taxon>
        <taxon>Actinomycetota</taxon>
        <taxon>Actinomycetes</taxon>
        <taxon>Mycobacteriales</taxon>
        <taxon>Mycobacteriaceae</taxon>
        <taxon>Mycobacterium</taxon>
    </lineage>
</organism>
<gene>
    <name evidence="1" type="primary">rho</name>
    <name type="ordered locus">ML1132</name>
</gene>
<keyword id="KW-0067">ATP-binding</keyword>
<keyword id="KW-0347">Helicase</keyword>
<keyword id="KW-0378">Hydrolase</keyword>
<keyword id="KW-0547">Nucleotide-binding</keyword>
<keyword id="KW-1185">Reference proteome</keyword>
<keyword id="KW-0694">RNA-binding</keyword>
<keyword id="KW-0804">Transcription</keyword>
<keyword id="KW-0805">Transcription regulation</keyword>
<keyword id="KW-0806">Transcription termination</keyword>
<reference key="1">
    <citation type="submission" date="1994-09" db="EMBL/GenBank/DDBJ databases">
        <authorList>
            <person name="Smith D.R."/>
            <person name="Robison K."/>
        </authorList>
    </citation>
    <scope>NUCLEOTIDE SEQUENCE [GENOMIC DNA]</scope>
</reference>
<reference key="2">
    <citation type="journal article" date="2001" name="Nature">
        <title>Massive gene decay in the leprosy bacillus.</title>
        <authorList>
            <person name="Cole S.T."/>
            <person name="Eiglmeier K."/>
            <person name="Parkhill J."/>
            <person name="James K.D."/>
            <person name="Thomson N.R."/>
            <person name="Wheeler P.R."/>
            <person name="Honore N."/>
            <person name="Garnier T."/>
            <person name="Churcher C.M."/>
            <person name="Harris D.E."/>
            <person name="Mungall K.L."/>
            <person name="Basham D."/>
            <person name="Brown D."/>
            <person name="Chillingworth T."/>
            <person name="Connor R."/>
            <person name="Davies R.M."/>
            <person name="Devlin K."/>
            <person name="Duthoy S."/>
            <person name="Feltwell T."/>
            <person name="Fraser A."/>
            <person name="Hamlin N."/>
            <person name="Holroyd S."/>
            <person name="Hornsby T."/>
            <person name="Jagels K."/>
            <person name="Lacroix C."/>
            <person name="Maclean J."/>
            <person name="Moule S."/>
            <person name="Murphy L.D."/>
            <person name="Oliver K."/>
            <person name="Quail M.A."/>
            <person name="Rajandream M.A."/>
            <person name="Rutherford K.M."/>
            <person name="Rutter S."/>
            <person name="Seeger K."/>
            <person name="Simon S."/>
            <person name="Simmonds M."/>
            <person name="Skelton J."/>
            <person name="Squares R."/>
            <person name="Squares S."/>
            <person name="Stevens K."/>
            <person name="Taylor K."/>
            <person name="Whitehead S."/>
            <person name="Woodward J.R."/>
            <person name="Barrell B.G."/>
        </authorList>
    </citation>
    <scope>NUCLEOTIDE SEQUENCE [LARGE SCALE GENOMIC DNA]</scope>
    <source>
        <strain>TN</strain>
    </source>
</reference>
<accession>P45835</accession>
<name>RHO_MYCLE</name>
<proteinExistence type="inferred from homology"/>